<keyword id="KW-0030">Aminoacyl-tRNA synthetase</keyword>
<keyword id="KW-0067">ATP-binding</keyword>
<keyword id="KW-0963">Cytoplasm</keyword>
<keyword id="KW-0436">Ligase</keyword>
<keyword id="KW-0547">Nucleotide-binding</keyword>
<keyword id="KW-0648">Protein biosynthesis</keyword>
<keyword id="KW-1185">Reference proteome</keyword>
<gene>
    <name evidence="1" type="primary">hisS</name>
    <name type="ordered locus">NP_5044A</name>
</gene>
<evidence type="ECO:0000255" key="1">
    <source>
        <dbReference type="HAMAP-Rule" id="MF_00127"/>
    </source>
</evidence>
<evidence type="ECO:0000256" key="2">
    <source>
        <dbReference type="SAM" id="MobiDB-lite"/>
    </source>
</evidence>
<organism>
    <name type="scientific">Natronomonas pharaonis (strain ATCC 35678 / DSM 2160 / CIP 103997 / JCM 8858 / NBRC 14720 / NCIMB 2260 / Gabara)</name>
    <name type="common">Halobacterium pharaonis</name>
    <dbReference type="NCBI Taxonomy" id="348780"/>
    <lineage>
        <taxon>Archaea</taxon>
        <taxon>Methanobacteriati</taxon>
        <taxon>Methanobacteriota</taxon>
        <taxon>Stenosarchaea group</taxon>
        <taxon>Halobacteria</taxon>
        <taxon>Halobacteriales</taxon>
        <taxon>Haloarculaceae</taxon>
        <taxon>Natronomonas</taxon>
    </lineage>
</organism>
<reference key="1">
    <citation type="journal article" date="2005" name="Genome Res.">
        <title>Living with two extremes: conclusions from the genome sequence of Natronomonas pharaonis.</title>
        <authorList>
            <person name="Falb M."/>
            <person name="Pfeiffer F."/>
            <person name="Palm P."/>
            <person name="Rodewald K."/>
            <person name="Hickmann V."/>
            <person name="Tittor J."/>
            <person name="Oesterhelt D."/>
        </authorList>
    </citation>
    <scope>NUCLEOTIDE SEQUENCE [LARGE SCALE GENOMIC DNA]</scope>
    <source>
        <strain>ATCC 35678 / DSM 2160 / CIP 103997 / JCM 8858 / NBRC 14720 / NCIMB 2260 / Gabara</strain>
    </source>
</reference>
<dbReference type="EC" id="6.1.1.21" evidence="1"/>
<dbReference type="EMBL" id="CR936257">
    <property type="protein sequence ID" value="CAI50613.1"/>
    <property type="molecule type" value="Genomic_DNA"/>
</dbReference>
<dbReference type="RefSeq" id="WP_011324223.1">
    <property type="nucleotide sequence ID" value="NC_007426.1"/>
</dbReference>
<dbReference type="SMR" id="Q3IMP5"/>
<dbReference type="STRING" id="348780.NP_5044A"/>
<dbReference type="EnsemblBacteria" id="CAI50613">
    <property type="protein sequence ID" value="CAI50613"/>
    <property type="gene ID" value="NP_5044A"/>
</dbReference>
<dbReference type="GeneID" id="3702823"/>
<dbReference type="KEGG" id="nph:NP_5044A"/>
<dbReference type="eggNOG" id="arCOG00404">
    <property type="taxonomic scope" value="Archaea"/>
</dbReference>
<dbReference type="HOGENOM" id="CLU_025113_3_1_2"/>
<dbReference type="OrthoDB" id="8659at2157"/>
<dbReference type="Proteomes" id="UP000002698">
    <property type="component" value="Chromosome"/>
</dbReference>
<dbReference type="GO" id="GO:0005737">
    <property type="term" value="C:cytoplasm"/>
    <property type="evidence" value="ECO:0007669"/>
    <property type="project" value="UniProtKB-SubCell"/>
</dbReference>
<dbReference type="GO" id="GO:0005524">
    <property type="term" value="F:ATP binding"/>
    <property type="evidence" value="ECO:0007669"/>
    <property type="project" value="UniProtKB-UniRule"/>
</dbReference>
<dbReference type="GO" id="GO:0004821">
    <property type="term" value="F:histidine-tRNA ligase activity"/>
    <property type="evidence" value="ECO:0007669"/>
    <property type="project" value="UniProtKB-UniRule"/>
</dbReference>
<dbReference type="GO" id="GO:0006427">
    <property type="term" value="P:histidyl-tRNA aminoacylation"/>
    <property type="evidence" value="ECO:0007669"/>
    <property type="project" value="UniProtKB-UniRule"/>
</dbReference>
<dbReference type="CDD" id="cd00773">
    <property type="entry name" value="HisRS-like_core"/>
    <property type="match status" value="1"/>
</dbReference>
<dbReference type="CDD" id="cd00859">
    <property type="entry name" value="HisRS_anticodon"/>
    <property type="match status" value="1"/>
</dbReference>
<dbReference type="Gene3D" id="3.40.50.800">
    <property type="entry name" value="Anticodon-binding domain"/>
    <property type="match status" value="1"/>
</dbReference>
<dbReference type="Gene3D" id="3.30.930.10">
    <property type="entry name" value="Bira Bifunctional Protein, Domain 2"/>
    <property type="match status" value="1"/>
</dbReference>
<dbReference type="HAMAP" id="MF_00127">
    <property type="entry name" value="His_tRNA_synth"/>
    <property type="match status" value="1"/>
</dbReference>
<dbReference type="InterPro" id="IPR006195">
    <property type="entry name" value="aa-tRNA-synth_II"/>
</dbReference>
<dbReference type="InterPro" id="IPR045864">
    <property type="entry name" value="aa-tRNA-synth_II/BPL/LPL"/>
</dbReference>
<dbReference type="InterPro" id="IPR004154">
    <property type="entry name" value="Anticodon-bd"/>
</dbReference>
<dbReference type="InterPro" id="IPR036621">
    <property type="entry name" value="Anticodon-bd_dom_sf"/>
</dbReference>
<dbReference type="InterPro" id="IPR015807">
    <property type="entry name" value="His-tRNA-ligase"/>
</dbReference>
<dbReference type="InterPro" id="IPR041715">
    <property type="entry name" value="HisRS-like_core"/>
</dbReference>
<dbReference type="InterPro" id="IPR004516">
    <property type="entry name" value="HisRS/HisZ"/>
</dbReference>
<dbReference type="InterPro" id="IPR033656">
    <property type="entry name" value="HisRS_anticodon"/>
</dbReference>
<dbReference type="NCBIfam" id="TIGR00442">
    <property type="entry name" value="hisS"/>
    <property type="match status" value="1"/>
</dbReference>
<dbReference type="PANTHER" id="PTHR43707:SF1">
    <property type="entry name" value="HISTIDINE--TRNA LIGASE, MITOCHONDRIAL-RELATED"/>
    <property type="match status" value="1"/>
</dbReference>
<dbReference type="PANTHER" id="PTHR43707">
    <property type="entry name" value="HISTIDYL-TRNA SYNTHETASE"/>
    <property type="match status" value="1"/>
</dbReference>
<dbReference type="Pfam" id="PF03129">
    <property type="entry name" value="HGTP_anticodon"/>
    <property type="match status" value="1"/>
</dbReference>
<dbReference type="Pfam" id="PF13393">
    <property type="entry name" value="tRNA-synt_His"/>
    <property type="match status" value="1"/>
</dbReference>
<dbReference type="PIRSF" id="PIRSF001549">
    <property type="entry name" value="His-tRNA_synth"/>
    <property type="match status" value="1"/>
</dbReference>
<dbReference type="SUPFAM" id="SSF52954">
    <property type="entry name" value="Class II aaRS ABD-related"/>
    <property type="match status" value="1"/>
</dbReference>
<dbReference type="SUPFAM" id="SSF55681">
    <property type="entry name" value="Class II aaRS and biotin synthetases"/>
    <property type="match status" value="1"/>
</dbReference>
<dbReference type="PROSITE" id="PS50862">
    <property type="entry name" value="AA_TRNA_LIGASE_II"/>
    <property type="match status" value="1"/>
</dbReference>
<proteinExistence type="inferred from homology"/>
<feature type="chain" id="PRO_1000016400" description="Histidine--tRNA ligase">
    <location>
        <begin position="1"/>
        <end position="432"/>
    </location>
</feature>
<feature type="region of interest" description="Disordered" evidence="2">
    <location>
        <begin position="412"/>
        <end position="432"/>
    </location>
</feature>
<feature type="compositionally biased region" description="Basic and acidic residues" evidence="2">
    <location>
        <begin position="422"/>
        <end position="432"/>
    </location>
</feature>
<name>SYH_NATPD</name>
<comment type="catalytic activity">
    <reaction evidence="1">
        <text>tRNA(His) + L-histidine + ATP = L-histidyl-tRNA(His) + AMP + diphosphate + H(+)</text>
        <dbReference type="Rhea" id="RHEA:17313"/>
        <dbReference type="Rhea" id="RHEA-COMP:9665"/>
        <dbReference type="Rhea" id="RHEA-COMP:9689"/>
        <dbReference type="ChEBI" id="CHEBI:15378"/>
        <dbReference type="ChEBI" id="CHEBI:30616"/>
        <dbReference type="ChEBI" id="CHEBI:33019"/>
        <dbReference type="ChEBI" id="CHEBI:57595"/>
        <dbReference type="ChEBI" id="CHEBI:78442"/>
        <dbReference type="ChEBI" id="CHEBI:78527"/>
        <dbReference type="ChEBI" id="CHEBI:456215"/>
        <dbReference type="EC" id="6.1.1.21"/>
    </reaction>
</comment>
<comment type="subcellular location">
    <subcellularLocation>
        <location evidence="1">Cytoplasm</location>
    </subcellularLocation>
</comment>
<comment type="similarity">
    <text evidence="1">Belongs to the class-II aminoacyl-tRNA synthetase family.</text>
</comment>
<sequence>MYDGLKGFREFYPGEMSARREVTDTIETRARRYGFREVGTPALERTQLYVDKSGEEIVEELYAFEDKGGREVSLTPELTPTVARMVVAKQQALAKPVKWFSTRPFWRYEQVQQGRFREFYQTNIDIFGSERPEADAEVLATAADALTDLGLDGADFEFRVSHRDILGGLLAAMDSDVDTTDAIRAVDKREKIDDEEYRSLLVGAGLTHEEADTFDSLLRTDDLSELVEFAGTDRVEAAVENLQAVLDAAADFGVREFCSVSLETARGLDYYTGVVFECFDTSGEVSRSVFGGGRYDDLIESFGGQPTPAVGVGIGHETLSLLCQRAGVWPAEELSTDYYVLTVGDTRDVALDVARELRALGHVVETDLSDRGFGDQLSYADGINAETVVVVGEQDLEDDAVTLKDMASGDQTQVPLAAFPPEEGRPTYDDYA</sequence>
<accession>Q3IMP5</accession>
<protein>
    <recommendedName>
        <fullName evidence="1">Histidine--tRNA ligase</fullName>
        <ecNumber evidence="1">6.1.1.21</ecNumber>
    </recommendedName>
    <alternativeName>
        <fullName evidence="1">Histidyl-tRNA synthetase</fullName>
        <shortName evidence="1">HisRS</shortName>
    </alternativeName>
</protein>